<feature type="chain" id="PRO_1000117303" description="Cysteine--tRNA ligase">
    <location>
        <begin position="1"/>
        <end position="519"/>
    </location>
</feature>
<feature type="short sequence motif" description="'HIGH' region">
    <location>
        <begin position="32"/>
        <end position="42"/>
    </location>
</feature>
<feature type="short sequence motif" description="'KMSKS' region">
    <location>
        <begin position="286"/>
        <end position="290"/>
    </location>
</feature>
<feature type="binding site" evidence="1">
    <location>
        <position position="30"/>
    </location>
    <ligand>
        <name>Zn(2+)</name>
        <dbReference type="ChEBI" id="CHEBI:29105"/>
    </ligand>
</feature>
<feature type="binding site" evidence="1">
    <location>
        <position position="221"/>
    </location>
    <ligand>
        <name>Zn(2+)</name>
        <dbReference type="ChEBI" id="CHEBI:29105"/>
    </ligand>
</feature>
<feature type="binding site" evidence="1">
    <location>
        <position position="253"/>
    </location>
    <ligand>
        <name>Zn(2+)</name>
        <dbReference type="ChEBI" id="CHEBI:29105"/>
    </ligand>
</feature>
<feature type="binding site" evidence="1">
    <location>
        <position position="257"/>
    </location>
    <ligand>
        <name>Zn(2+)</name>
        <dbReference type="ChEBI" id="CHEBI:29105"/>
    </ligand>
</feature>
<feature type="binding site" evidence="1">
    <location>
        <position position="289"/>
    </location>
    <ligand>
        <name>ATP</name>
        <dbReference type="ChEBI" id="CHEBI:30616"/>
    </ligand>
</feature>
<organism>
    <name type="scientific">Cereibacter sphaeroides (strain KD131 / KCTC 12085)</name>
    <name type="common">Rhodobacter sphaeroides</name>
    <dbReference type="NCBI Taxonomy" id="557760"/>
    <lineage>
        <taxon>Bacteria</taxon>
        <taxon>Pseudomonadati</taxon>
        <taxon>Pseudomonadota</taxon>
        <taxon>Alphaproteobacteria</taxon>
        <taxon>Rhodobacterales</taxon>
        <taxon>Paracoccaceae</taxon>
        <taxon>Cereibacter</taxon>
    </lineage>
</organism>
<gene>
    <name evidence="1" type="primary">cysS</name>
    <name type="ordered locus">RSKD131_1040</name>
</gene>
<reference key="1">
    <citation type="journal article" date="2009" name="J. Bacteriol.">
        <title>Complete genome sequence of Rhodobacter sphaeroides KD131.</title>
        <authorList>
            <person name="Lim S.-K."/>
            <person name="Kim S.J."/>
            <person name="Cha S.H."/>
            <person name="Oh Y.-K."/>
            <person name="Rhee H.-J."/>
            <person name="Kim M.-S."/>
            <person name="Lee J.K."/>
        </authorList>
    </citation>
    <scope>NUCLEOTIDE SEQUENCE [LARGE SCALE GENOMIC DNA]</scope>
    <source>
        <strain>KD131 / KCTC 12085</strain>
    </source>
</reference>
<comment type="catalytic activity">
    <reaction evidence="1">
        <text>tRNA(Cys) + L-cysteine + ATP = L-cysteinyl-tRNA(Cys) + AMP + diphosphate</text>
        <dbReference type="Rhea" id="RHEA:17773"/>
        <dbReference type="Rhea" id="RHEA-COMP:9661"/>
        <dbReference type="Rhea" id="RHEA-COMP:9679"/>
        <dbReference type="ChEBI" id="CHEBI:30616"/>
        <dbReference type="ChEBI" id="CHEBI:33019"/>
        <dbReference type="ChEBI" id="CHEBI:35235"/>
        <dbReference type="ChEBI" id="CHEBI:78442"/>
        <dbReference type="ChEBI" id="CHEBI:78517"/>
        <dbReference type="ChEBI" id="CHEBI:456215"/>
        <dbReference type="EC" id="6.1.1.16"/>
    </reaction>
</comment>
<comment type="cofactor">
    <cofactor evidence="1">
        <name>Zn(2+)</name>
        <dbReference type="ChEBI" id="CHEBI:29105"/>
    </cofactor>
    <text evidence="1">Binds 1 zinc ion per subunit.</text>
</comment>
<comment type="subunit">
    <text evidence="1">Monomer.</text>
</comment>
<comment type="subcellular location">
    <subcellularLocation>
        <location evidence="1">Cytoplasm</location>
    </subcellularLocation>
</comment>
<comment type="similarity">
    <text evidence="1">Belongs to the class-I aminoacyl-tRNA synthetase family.</text>
</comment>
<proteinExistence type="inferred from homology"/>
<evidence type="ECO:0000255" key="1">
    <source>
        <dbReference type="HAMAP-Rule" id="MF_00041"/>
    </source>
</evidence>
<accession>B9KRV8</accession>
<keyword id="KW-0030">Aminoacyl-tRNA synthetase</keyword>
<keyword id="KW-0067">ATP-binding</keyword>
<keyword id="KW-0963">Cytoplasm</keyword>
<keyword id="KW-0436">Ligase</keyword>
<keyword id="KW-0479">Metal-binding</keyword>
<keyword id="KW-0547">Nucleotide-binding</keyword>
<keyword id="KW-0648">Protein biosynthesis</keyword>
<keyword id="KW-0862">Zinc</keyword>
<protein>
    <recommendedName>
        <fullName evidence="1">Cysteine--tRNA ligase</fullName>
        <ecNumber evidence="1">6.1.1.16</ecNumber>
    </recommendedName>
    <alternativeName>
        <fullName evidence="1">Cysteinyl-tRNA synthetase</fullName>
        <shortName evidence="1">CysRS</shortName>
    </alternativeName>
</protein>
<sequence length="519" mass="59052">MTEIRLTNTKSRRKEAFEPIDRKNVRLYVCGPTVYDRAHLGNGRPVVVFDVLFRLLRHVYGEGHVTYVRNFTDVDDKINAAALARKDAGDPRSLEALIRERTDETIRWYHEDMDALGALRPTQEPRATEWIGAMIAMIEDLIAKGHAYEREGHVLFRVRSYRDYGALSGRSVDDMIAGARVEVAPFKEDPMDFVLWKPSDDELPGWDSPWGRGRPGWHIECSAMADGLLMKDLPENERSFDIHAGGIDLQFPHHENEIAQSRCAHPEGEFAKVWMHNEMLLVDGKKMSKSLGNFFTVRELIEEYRKQFAVNNIGPAIRLRFLQGHYRAPIDAARHYIEQASVKLGLWWHFISEHLDAPITDKDRRDILATSPVIEALADDLNTPLAVTYIDGLVSRLRGGIQKQGYVDAEMDDLEMVAKRARVAIEFLGFTFDDLEEHHGPVQLKRLKERQLSASADVGVRIGRLLEERAEARKARDFARSDAIRDRLQAAGVLIKDSRDGATWELEPGFDPAKLGEPE</sequence>
<dbReference type="EC" id="6.1.1.16" evidence="1"/>
<dbReference type="EMBL" id="CP001150">
    <property type="protein sequence ID" value="ACM00900.1"/>
    <property type="molecule type" value="Genomic_DNA"/>
</dbReference>
<dbReference type="RefSeq" id="WP_015920474.1">
    <property type="nucleotide sequence ID" value="NC_011963.1"/>
</dbReference>
<dbReference type="SMR" id="B9KRV8"/>
<dbReference type="GeneID" id="67446471"/>
<dbReference type="KEGG" id="rsk:RSKD131_1040"/>
<dbReference type="HOGENOM" id="CLU_013528_0_1_5"/>
<dbReference type="GO" id="GO:0005829">
    <property type="term" value="C:cytosol"/>
    <property type="evidence" value="ECO:0007669"/>
    <property type="project" value="TreeGrafter"/>
</dbReference>
<dbReference type="GO" id="GO:0005524">
    <property type="term" value="F:ATP binding"/>
    <property type="evidence" value="ECO:0007669"/>
    <property type="project" value="UniProtKB-UniRule"/>
</dbReference>
<dbReference type="GO" id="GO:0004817">
    <property type="term" value="F:cysteine-tRNA ligase activity"/>
    <property type="evidence" value="ECO:0007669"/>
    <property type="project" value="UniProtKB-UniRule"/>
</dbReference>
<dbReference type="GO" id="GO:0008270">
    <property type="term" value="F:zinc ion binding"/>
    <property type="evidence" value="ECO:0007669"/>
    <property type="project" value="UniProtKB-UniRule"/>
</dbReference>
<dbReference type="GO" id="GO:0006423">
    <property type="term" value="P:cysteinyl-tRNA aminoacylation"/>
    <property type="evidence" value="ECO:0007669"/>
    <property type="project" value="UniProtKB-UniRule"/>
</dbReference>
<dbReference type="CDD" id="cd00672">
    <property type="entry name" value="CysRS_core"/>
    <property type="match status" value="1"/>
</dbReference>
<dbReference type="Gene3D" id="1.20.120.1910">
    <property type="entry name" value="Cysteine-tRNA ligase, C-terminal anti-codon recognition domain"/>
    <property type="match status" value="1"/>
</dbReference>
<dbReference type="Gene3D" id="3.40.50.620">
    <property type="entry name" value="HUPs"/>
    <property type="match status" value="1"/>
</dbReference>
<dbReference type="HAMAP" id="MF_00041">
    <property type="entry name" value="Cys_tRNA_synth"/>
    <property type="match status" value="1"/>
</dbReference>
<dbReference type="InterPro" id="IPR015803">
    <property type="entry name" value="Cys-tRNA-ligase"/>
</dbReference>
<dbReference type="InterPro" id="IPR024909">
    <property type="entry name" value="Cys-tRNA/MSH_ligase"/>
</dbReference>
<dbReference type="InterPro" id="IPR056411">
    <property type="entry name" value="CysS_C"/>
</dbReference>
<dbReference type="InterPro" id="IPR014729">
    <property type="entry name" value="Rossmann-like_a/b/a_fold"/>
</dbReference>
<dbReference type="InterPro" id="IPR032678">
    <property type="entry name" value="tRNA-synt_1_cat_dom"/>
</dbReference>
<dbReference type="InterPro" id="IPR009080">
    <property type="entry name" value="tRNAsynth_Ia_anticodon-bd"/>
</dbReference>
<dbReference type="NCBIfam" id="TIGR00435">
    <property type="entry name" value="cysS"/>
    <property type="match status" value="1"/>
</dbReference>
<dbReference type="PANTHER" id="PTHR10890:SF3">
    <property type="entry name" value="CYSTEINE--TRNA LIGASE, CYTOPLASMIC"/>
    <property type="match status" value="1"/>
</dbReference>
<dbReference type="PANTHER" id="PTHR10890">
    <property type="entry name" value="CYSTEINYL-TRNA SYNTHETASE"/>
    <property type="match status" value="1"/>
</dbReference>
<dbReference type="Pfam" id="PF23493">
    <property type="entry name" value="CysS_C"/>
    <property type="match status" value="1"/>
</dbReference>
<dbReference type="Pfam" id="PF01406">
    <property type="entry name" value="tRNA-synt_1e"/>
    <property type="match status" value="1"/>
</dbReference>
<dbReference type="PRINTS" id="PR00983">
    <property type="entry name" value="TRNASYNTHCYS"/>
</dbReference>
<dbReference type="SUPFAM" id="SSF47323">
    <property type="entry name" value="Anticodon-binding domain of a subclass of class I aminoacyl-tRNA synthetases"/>
    <property type="match status" value="1"/>
</dbReference>
<dbReference type="SUPFAM" id="SSF52374">
    <property type="entry name" value="Nucleotidylyl transferase"/>
    <property type="match status" value="1"/>
</dbReference>
<name>SYC_CERSK</name>